<name>HCHA_ECO7I</name>
<keyword id="KW-0963">Cytoplasm</keyword>
<keyword id="KW-0227">DNA damage</keyword>
<keyword id="KW-0234">DNA repair</keyword>
<keyword id="KW-0378">Hydrolase</keyword>
<keyword id="KW-0479">Metal-binding</keyword>
<keyword id="KW-0346">Stress response</keyword>
<keyword id="KW-0862">Zinc</keyword>
<dbReference type="EC" id="3.1.2.-" evidence="1"/>
<dbReference type="EC" id="3.5.1.-" evidence="1"/>
<dbReference type="EC" id="3.5.1.124" evidence="1"/>
<dbReference type="EMBL" id="CU928164">
    <property type="protein sequence ID" value="CAR17224.1"/>
    <property type="molecule type" value="Genomic_DNA"/>
</dbReference>
<dbReference type="RefSeq" id="WP_000218217.1">
    <property type="nucleotide sequence ID" value="NC_011750.1"/>
</dbReference>
<dbReference type="RefSeq" id="YP_002407102.1">
    <property type="nucleotide sequence ID" value="NC_011750.1"/>
</dbReference>
<dbReference type="SMR" id="B7NRB5"/>
<dbReference type="STRING" id="585057.ECIAI39_1090"/>
<dbReference type="MEROPS" id="C56.006"/>
<dbReference type="KEGG" id="ect:ECIAI39_1090"/>
<dbReference type="PATRIC" id="fig|585057.6.peg.1140"/>
<dbReference type="HOGENOM" id="CLU_066933_0_0_6"/>
<dbReference type="Proteomes" id="UP000000749">
    <property type="component" value="Chromosome"/>
</dbReference>
<dbReference type="GO" id="GO:0005737">
    <property type="term" value="C:cytoplasm"/>
    <property type="evidence" value="ECO:0007669"/>
    <property type="project" value="UniProtKB-SubCell"/>
</dbReference>
<dbReference type="GO" id="GO:0019172">
    <property type="term" value="F:glyoxalase III activity"/>
    <property type="evidence" value="ECO:0007669"/>
    <property type="project" value="TreeGrafter"/>
</dbReference>
<dbReference type="GO" id="GO:0036524">
    <property type="term" value="F:protein deglycase activity"/>
    <property type="evidence" value="ECO:0007669"/>
    <property type="project" value="UniProtKB-UniRule"/>
</dbReference>
<dbReference type="GO" id="GO:0016790">
    <property type="term" value="F:thiolester hydrolase activity"/>
    <property type="evidence" value="ECO:0007669"/>
    <property type="project" value="UniProtKB-UniRule"/>
</dbReference>
<dbReference type="GO" id="GO:0008270">
    <property type="term" value="F:zinc ion binding"/>
    <property type="evidence" value="ECO:0007669"/>
    <property type="project" value="UniProtKB-UniRule"/>
</dbReference>
<dbReference type="GO" id="GO:0006281">
    <property type="term" value="P:DNA repair"/>
    <property type="evidence" value="ECO:0007669"/>
    <property type="project" value="UniProtKB-UniRule"/>
</dbReference>
<dbReference type="GO" id="GO:0019243">
    <property type="term" value="P:methylglyoxal catabolic process to D-lactate via S-lactoyl-glutathione"/>
    <property type="evidence" value="ECO:0007669"/>
    <property type="project" value="TreeGrafter"/>
</dbReference>
<dbReference type="GO" id="GO:0030091">
    <property type="term" value="P:protein repair"/>
    <property type="evidence" value="ECO:0007669"/>
    <property type="project" value="UniProtKB-UniRule"/>
</dbReference>
<dbReference type="FunFam" id="3.40.50.880:FF:000026">
    <property type="entry name" value="Protein/nucleic acid deglycase HchA"/>
    <property type="match status" value="1"/>
</dbReference>
<dbReference type="Gene3D" id="3.40.50.880">
    <property type="match status" value="1"/>
</dbReference>
<dbReference type="HAMAP" id="MF_01046">
    <property type="entry name" value="Deglycase_HchA"/>
    <property type="match status" value="1"/>
</dbReference>
<dbReference type="InterPro" id="IPR029062">
    <property type="entry name" value="Class_I_gatase-like"/>
</dbReference>
<dbReference type="InterPro" id="IPR017283">
    <property type="entry name" value="HchA"/>
</dbReference>
<dbReference type="InterPro" id="IPR050325">
    <property type="entry name" value="Prot/Nucl_acid_deglycase"/>
</dbReference>
<dbReference type="NCBIfam" id="NF003168">
    <property type="entry name" value="PRK04155.1"/>
    <property type="match status" value="1"/>
</dbReference>
<dbReference type="PANTHER" id="PTHR48094">
    <property type="entry name" value="PROTEIN/NUCLEIC ACID DEGLYCASE DJ-1-RELATED"/>
    <property type="match status" value="1"/>
</dbReference>
<dbReference type="PANTHER" id="PTHR48094:SF20">
    <property type="entry name" value="PROTEIN_NUCLEIC ACID DEGLYCASE 1"/>
    <property type="match status" value="1"/>
</dbReference>
<dbReference type="PIRSF" id="PIRSF037798">
    <property type="entry name" value="Chaperone_HchA"/>
    <property type="match status" value="1"/>
</dbReference>
<dbReference type="SUPFAM" id="SSF52317">
    <property type="entry name" value="Class I glutamine amidotransferase-like"/>
    <property type="match status" value="1"/>
</dbReference>
<reference key="1">
    <citation type="journal article" date="2009" name="PLoS Genet.">
        <title>Organised genome dynamics in the Escherichia coli species results in highly diverse adaptive paths.</title>
        <authorList>
            <person name="Touchon M."/>
            <person name="Hoede C."/>
            <person name="Tenaillon O."/>
            <person name="Barbe V."/>
            <person name="Baeriswyl S."/>
            <person name="Bidet P."/>
            <person name="Bingen E."/>
            <person name="Bonacorsi S."/>
            <person name="Bouchier C."/>
            <person name="Bouvet O."/>
            <person name="Calteau A."/>
            <person name="Chiapello H."/>
            <person name="Clermont O."/>
            <person name="Cruveiller S."/>
            <person name="Danchin A."/>
            <person name="Diard M."/>
            <person name="Dossat C."/>
            <person name="Karoui M.E."/>
            <person name="Frapy E."/>
            <person name="Garry L."/>
            <person name="Ghigo J.M."/>
            <person name="Gilles A.M."/>
            <person name="Johnson J."/>
            <person name="Le Bouguenec C."/>
            <person name="Lescat M."/>
            <person name="Mangenot S."/>
            <person name="Martinez-Jehanne V."/>
            <person name="Matic I."/>
            <person name="Nassif X."/>
            <person name="Oztas S."/>
            <person name="Petit M.A."/>
            <person name="Pichon C."/>
            <person name="Rouy Z."/>
            <person name="Ruf C.S."/>
            <person name="Schneider D."/>
            <person name="Tourret J."/>
            <person name="Vacherie B."/>
            <person name="Vallenet D."/>
            <person name="Medigue C."/>
            <person name="Rocha E.P.C."/>
            <person name="Denamur E."/>
        </authorList>
    </citation>
    <scope>NUCLEOTIDE SEQUENCE [LARGE SCALE GENOMIC DNA]</scope>
    <source>
        <strain>IAI39 / ExPEC</strain>
    </source>
</reference>
<protein>
    <recommendedName>
        <fullName evidence="1">Protein/nucleic acid deglycase HchA</fullName>
        <ecNumber evidence="1">3.1.2.-</ecNumber>
        <ecNumber evidence="1">3.5.1.-</ecNumber>
        <ecNumber evidence="1">3.5.1.124</ecNumber>
    </recommendedName>
    <alternativeName>
        <fullName evidence="1">Maillard deglycase</fullName>
    </alternativeName>
</protein>
<accession>B7NRB5</accession>
<proteinExistence type="inferred from homology"/>
<feature type="chain" id="PRO_1000136176" description="Protein/nucleic acid deglycase HchA">
    <location>
        <begin position="1"/>
        <end position="283"/>
    </location>
</feature>
<feature type="active site" description="Nucleophile" evidence="1">
    <location>
        <position position="185"/>
    </location>
</feature>
<feature type="binding site" evidence="1">
    <location>
        <position position="86"/>
    </location>
    <ligand>
        <name>Zn(2+)</name>
        <dbReference type="ChEBI" id="CHEBI:29105"/>
    </ligand>
</feature>
<feature type="binding site" evidence="1">
    <location>
        <position position="91"/>
    </location>
    <ligand>
        <name>Zn(2+)</name>
        <dbReference type="ChEBI" id="CHEBI:29105"/>
    </ligand>
</feature>
<feature type="binding site" evidence="1">
    <location>
        <position position="123"/>
    </location>
    <ligand>
        <name>Zn(2+)</name>
        <dbReference type="ChEBI" id="CHEBI:29105"/>
    </ligand>
</feature>
<comment type="function">
    <text evidence="1">Protein and nucleotide deglycase that catalyzes the deglycation of the Maillard adducts formed between amino groups of proteins or nucleotides and reactive carbonyl groups of glyoxals. Thus, functions as a protein deglycase that repairs methylglyoxal- and glyoxal-glycated proteins, and releases repaired proteins and lactate or glycolate, respectively. Deglycates cysteine, arginine and lysine residues in proteins, and thus reactivates these proteins by reversing glycation by glyoxals. Acts on early glycation intermediates (hemithioacetals and aminocarbinols), preventing the formation of Schiff bases and advanced glycation endproducts (AGE). Also functions as a nucleotide deglycase able to repair glycated guanine in the free nucleotide pool (GTP, GDP, GMP, dGTP) and in DNA and RNA. Is thus involved in a major nucleotide repair system named guanine glycation repair (GG repair), dedicated to reversing methylglyoxal and glyoxal damage via nucleotide sanitization and direct nucleic acid repair. Plays an important role in protecting cells from carbonyl stress.</text>
</comment>
<comment type="catalytic activity">
    <reaction evidence="1">
        <text>N(omega)-(1-hydroxy-2-oxopropyl)-L-arginyl-[protein] + H2O = lactate + L-arginyl-[protein] + H(+)</text>
        <dbReference type="Rhea" id="RHEA:49548"/>
        <dbReference type="Rhea" id="RHEA-COMP:10532"/>
        <dbReference type="Rhea" id="RHEA-COMP:12428"/>
        <dbReference type="ChEBI" id="CHEBI:15377"/>
        <dbReference type="ChEBI" id="CHEBI:15378"/>
        <dbReference type="ChEBI" id="CHEBI:24996"/>
        <dbReference type="ChEBI" id="CHEBI:29965"/>
        <dbReference type="ChEBI" id="CHEBI:131708"/>
        <dbReference type="EC" id="3.5.1.124"/>
    </reaction>
</comment>
<comment type="catalytic activity">
    <reaction evidence="1">
        <text>N(6)-(1-hydroxy-2-oxopropyl)-L-lysyl-[protein] + H2O = lactate + L-lysyl-[protein] + H(+)</text>
        <dbReference type="Rhea" id="RHEA:49552"/>
        <dbReference type="Rhea" id="RHEA-COMP:9752"/>
        <dbReference type="Rhea" id="RHEA-COMP:12429"/>
        <dbReference type="ChEBI" id="CHEBI:15377"/>
        <dbReference type="ChEBI" id="CHEBI:15378"/>
        <dbReference type="ChEBI" id="CHEBI:24996"/>
        <dbReference type="ChEBI" id="CHEBI:29969"/>
        <dbReference type="ChEBI" id="CHEBI:131709"/>
        <dbReference type="EC" id="3.5.1.124"/>
    </reaction>
</comment>
<comment type="catalytic activity">
    <reaction evidence="1">
        <text>S-(1-hydroxy-2-oxopropyl)-L-cysteinyl-[protein] + H2O = lactate + L-cysteinyl-[protein] + H(+)</text>
        <dbReference type="Rhea" id="RHEA:49556"/>
        <dbReference type="Rhea" id="RHEA-COMP:10131"/>
        <dbReference type="Rhea" id="RHEA-COMP:12430"/>
        <dbReference type="ChEBI" id="CHEBI:15377"/>
        <dbReference type="ChEBI" id="CHEBI:15378"/>
        <dbReference type="ChEBI" id="CHEBI:24996"/>
        <dbReference type="ChEBI" id="CHEBI:29950"/>
        <dbReference type="ChEBI" id="CHEBI:131710"/>
        <dbReference type="EC" id="3.5.1.124"/>
    </reaction>
</comment>
<comment type="catalytic activity">
    <reaction evidence="1">
        <text>N(omega)-(1-hydroxy-2-oxoethyl)-L-arginyl-[protein] + H2O = L-arginyl-[protein] + glycolate + H(+)</text>
        <dbReference type="Rhea" id="RHEA:57188"/>
        <dbReference type="Rhea" id="RHEA-COMP:10532"/>
        <dbReference type="Rhea" id="RHEA-COMP:14844"/>
        <dbReference type="ChEBI" id="CHEBI:15377"/>
        <dbReference type="ChEBI" id="CHEBI:15378"/>
        <dbReference type="ChEBI" id="CHEBI:29805"/>
        <dbReference type="ChEBI" id="CHEBI:29965"/>
        <dbReference type="ChEBI" id="CHEBI:141553"/>
        <dbReference type="EC" id="3.5.1.124"/>
    </reaction>
</comment>
<comment type="catalytic activity">
    <reaction evidence="1">
        <text>N(6)-(1-hydroxy-2-oxoethyl)-L-lysyl-[protein] + H2O = glycolate + L-lysyl-[protein] + H(+)</text>
        <dbReference type="Rhea" id="RHEA:57192"/>
        <dbReference type="Rhea" id="RHEA-COMP:9752"/>
        <dbReference type="Rhea" id="RHEA-COMP:14845"/>
        <dbReference type="ChEBI" id="CHEBI:15377"/>
        <dbReference type="ChEBI" id="CHEBI:15378"/>
        <dbReference type="ChEBI" id="CHEBI:29805"/>
        <dbReference type="ChEBI" id="CHEBI:29969"/>
        <dbReference type="ChEBI" id="CHEBI:141554"/>
        <dbReference type="EC" id="3.5.1.124"/>
    </reaction>
</comment>
<comment type="catalytic activity">
    <reaction evidence="1">
        <text>S-(1-hydroxy-2-oxoethyl)-L-cysteinyl-[protein] + H2O = glycolate + L-cysteinyl-[protein] + H(+)</text>
        <dbReference type="Rhea" id="RHEA:57196"/>
        <dbReference type="Rhea" id="RHEA-COMP:10131"/>
        <dbReference type="Rhea" id="RHEA-COMP:14846"/>
        <dbReference type="ChEBI" id="CHEBI:15377"/>
        <dbReference type="ChEBI" id="CHEBI:15378"/>
        <dbReference type="ChEBI" id="CHEBI:29805"/>
        <dbReference type="ChEBI" id="CHEBI:29950"/>
        <dbReference type="ChEBI" id="CHEBI:141555"/>
        <dbReference type="EC" id="3.5.1.124"/>
    </reaction>
</comment>
<comment type="catalytic activity">
    <reaction evidence="1">
        <text>N(2)-(1-hydroxy-2-oxopropyl)-dGTP + H2O = lactate + dGTP + H(+)</text>
        <dbReference type="Rhea" id="RHEA:57244"/>
        <dbReference type="ChEBI" id="CHEBI:15377"/>
        <dbReference type="ChEBI" id="CHEBI:15378"/>
        <dbReference type="ChEBI" id="CHEBI:24996"/>
        <dbReference type="ChEBI" id="CHEBI:61429"/>
        <dbReference type="ChEBI" id="CHEBI:141569"/>
    </reaction>
</comment>
<comment type="catalytic activity">
    <reaction evidence="1">
        <text>N(2)-(1-hydroxy-2-oxopropyl)-GTP + H2O = lactate + GTP + H(+)</text>
        <dbReference type="Rhea" id="RHEA:57256"/>
        <dbReference type="ChEBI" id="CHEBI:15377"/>
        <dbReference type="ChEBI" id="CHEBI:15378"/>
        <dbReference type="ChEBI" id="CHEBI:24996"/>
        <dbReference type="ChEBI" id="CHEBI:37565"/>
        <dbReference type="ChEBI" id="CHEBI:141570"/>
    </reaction>
</comment>
<comment type="catalytic activity">
    <reaction evidence="1">
        <text>N(2)-(1-hydroxy-2-oxopropyl)-GDP + H2O = lactate + GDP + H(+)</text>
        <dbReference type="Rhea" id="RHEA:57260"/>
        <dbReference type="ChEBI" id="CHEBI:15377"/>
        <dbReference type="ChEBI" id="CHEBI:15378"/>
        <dbReference type="ChEBI" id="CHEBI:24996"/>
        <dbReference type="ChEBI" id="CHEBI:58189"/>
        <dbReference type="ChEBI" id="CHEBI:141573"/>
    </reaction>
</comment>
<comment type="catalytic activity">
    <reaction evidence="1">
        <text>N(2)-(1-hydroxy-2-oxopropyl)-GMP + H2O = lactate + GMP + H(+)</text>
        <dbReference type="Rhea" id="RHEA:57268"/>
        <dbReference type="ChEBI" id="CHEBI:15377"/>
        <dbReference type="ChEBI" id="CHEBI:15378"/>
        <dbReference type="ChEBI" id="CHEBI:24996"/>
        <dbReference type="ChEBI" id="CHEBI:58115"/>
        <dbReference type="ChEBI" id="CHEBI:141575"/>
    </reaction>
</comment>
<comment type="catalytic activity">
    <reaction evidence="1">
        <text>N(2)-(1-hydroxy-2-oxoethyl)-dGTP + H2O = dGTP + glycolate + H(+)</text>
        <dbReference type="Rhea" id="RHEA:57248"/>
        <dbReference type="ChEBI" id="CHEBI:15377"/>
        <dbReference type="ChEBI" id="CHEBI:15378"/>
        <dbReference type="ChEBI" id="CHEBI:29805"/>
        <dbReference type="ChEBI" id="CHEBI:61429"/>
        <dbReference type="ChEBI" id="CHEBI:141572"/>
    </reaction>
</comment>
<comment type="catalytic activity">
    <reaction evidence="1">
        <text>N(2)-(1-hydroxy-2-oxoethyl)-GTP + H2O = glycolate + GTP + H(+)</text>
        <dbReference type="Rhea" id="RHEA:57252"/>
        <dbReference type="ChEBI" id="CHEBI:15377"/>
        <dbReference type="ChEBI" id="CHEBI:15378"/>
        <dbReference type="ChEBI" id="CHEBI:29805"/>
        <dbReference type="ChEBI" id="CHEBI:37565"/>
        <dbReference type="ChEBI" id="CHEBI:141571"/>
    </reaction>
</comment>
<comment type="catalytic activity">
    <reaction evidence="1">
        <text>N(2)-(1-hydroxy-2-oxoethyl)-GDP + H2O = glycolate + GDP + H(+)</text>
        <dbReference type="Rhea" id="RHEA:57264"/>
        <dbReference type="ChEBI" id="CHEBI:15377"/>
        <dbReference type="ChEBI" id="CHEBI:15378"/>
        <dbReference type="ChEBI" id="CHEBI:29805"/>
        <dbReference type="ChEBI" id="CHEBI:58189"/>
        <dbReference type="ChEBI" id="CHEBI:141574"/>
    </reaction>
</comment>
<comment type="catalytic activity">
    <reaction evidence="1">
        <text>N(2)-(1-hydroxy-2-oxoethyl)-GMP + H2O = glycolate + GMP + H(+)</text>
        <dbReference type="Rhea" id="RHEA:57304"/>
        <dbReference type="ChEBI" id="CHEBI:15377"/>
        <dbReference type="ChEBI" id="CHEBI:15378"/>
        <dbReference type="ChEBI" id="CHEBI:29805"/>
        <dbReference type="ChEBI" id="CHEBI:58115"/>
        <dbReference type="ChEBI" id="CHEBI:141576"/>
    </reaction>
</comment>
<comment type="catalytic activity">
    <reaction evidence="1">
        <text>an N(2)-(1-hydroxy-2-oxopropyl)-guanosine in RNA + H2O = a guanosine in RNA + lactate + H(+)</text>
        <dbReference type="Rhea" id="RHEA:57288"/>
        <dbReference type="Rhea" id="RHEA-COMP:14855"/>
        <dbReference type="Rhea" id="RHEA-COMP:14858"/>
        <dbReference type="ChEBI" id="CHEBI:15377"/>
        <dbReference type="ChEBI" id="CHEBI:15378"/>
        <dbReference type="ChEBI" id="CHEBI:24996"/>
        <dbReference type="ChEBI" id="CHEBI:74269"/>
        <dbReference type="ChEBI" id="CHEBI:141580"/>
    </reaction>
</comment>
<comment type="catalytic activity">
    <reaction evidence="1">
        <text>an N(2)-(1-hydroxy-2-oxopropyl)-2'-deoxyguanosine in DNA + H2O = a 2'-deoxyguanosine in DNA + lactate + H(+)</text>
        <dbReference type="Rhea" id="RHEA:57300"/>
        <dbReference type="Rhea" id="RHEA-COMP:11367"/>
        <dbReference type="Rhea" id="RHEA-COMP:14856"/>
        <dbReference type="ChEBI" id="CHEBI:15377"/>
        <dbReference type="ChEBI" id="CHEBI:15378"/>
        <dbReference type="ChEBI" id="CHEBI:24996"/>
        <dbReference type="ChEBI" id="CHEBI:85445"/>
        <dbReference type="ChEBI" id="CHEBI:141578"/>
    </reaction>
</comment>
<comment type="catalytic activity">
    <reaction evidence="1">
        <text>an N(2)-(1-hydroxy-2-oxoethyl)-guanosine in RNA + H2O = a guanosine in RNA + glycolate + H(+)</text>
        <dbReference type="Rhea" id="RHEA:57292"/>
        <dbReference type="Rhea" id="RHEA-COMP:14855"/>
        <dbReference type="Rhea" id="RHEA-COMP:14859"/>
        <dbReference type="ChEBI" id="CHEBI:15377"/>
        <dbReference type="ChEBI" id="CHEBI:15378"/>
        <dbReference type="ChEBI" id="CHEBI:29805"/>
        <dbReference type="ChEBI" id="CHEBI:74269"/>
        <dbReference type="ChEBI" id="CHEBI:141581"/>
    </reaction>
</comment>
<comment type="catalytic activity">
    <reaction evidence="1">
        <text>an N(2)-(1-hydroxy-2-oxoethyl)-2'-deoxyguanosine in DNA + H2O = a 2'-deoxyguanosine in DNA + glycolate + H(+)</text>
        <dbReference type="Rhea" id="RHEA:57296"/>
        <dbReference type="Rhea" id="RHEA-COMP:11367"/>
        <dbReference type="Rhea" id="RHEA-COMP:14857"/>
        <dbReference type="ChEBI" id="CHEBI:15377"/>
        <dbReference type="ChEBI" id="CHEBI:15378"/>
        <dbReference type="ChEBI" id="CHEBI:29805"/>
        <dbReference type="ChEBI" id="CHEBI:85445"/>
        <dbReference type="ChEBI" id="CHEBI:141579"/>
    </reaction>
</comment>
<comment type="subunit">
    <text evidence="1">Homodimer.</text>
</comment>
<comment type="subcellular location">
    <subcellularLocation>
        <location evidence="1">Cytoplasm</location>
    </subcellularLocation>
</comment>
<comment type="induction">
    <text evidence="1">By heat shock.</text>
</comment>
<comment type="similarity">
    <text evidence="1">Belongs to the peptidase C56 family. HchA subfamily.</text>
</comment>
<organism>
    <name type="scientific">Escherichia coli O7:K1 (strain IAI39 / ExPEC)</name>
    <dbReference type="NCBI Taxonomy" id="585057"/>
    <lineage>
        <taxon>Bacteria</taxon>
        <taxon>Pseudomonadati</taxon>
        <taxon>Pseudomonadota</taxon>
        <taxon>Gammaproteobacteria</taxon>
        <taxon>Enterobacterales</taxon>
        <taxon>Enterobacteriaceae</taxon>
        <taxon>Escherichia</taxon>
    </lineage>
</organism>
<sequence>MTVQTSKNPQVDIAEDNAFFPSEYSLSQYTSPVSDLDGVDYPKPYRGKHKILVIAADERYLPTDNGKLFSTGNHPIETLLPLYHLHAAGFEFEVATISGLMTKFEYWAMPHKDEKVMPFFEQHKSLFRNPKKLADVVASLNADSEYAAIFVPGGHGALIGLPESQDVAAALQWAIKNDRFVISLCHGPAAFLALRHSDNPLNGYSICAFPDAADKQTPDIGYMPGHLTWYFGEELKKMGMNIINDDITGRVHKDRKLLTGDSPFAANALGKLAAQEMLAAYAS</sequence>
<gene>
    <name evidence="1" type="primary">hchA</name>
    <name type="ordered locus">ECIAI39_1090</name>
</gene>
<evidence type="ECO:0000255" key="1">
    <source>
        <dbReference type="HAMAP-Rule" id="MF_01046"/>
    </source>
</evidence>